<keyword id="KW-0963">Cytoplasm</keyword>
<keyword id="KW-0690">Ribosome biogenesis</keyword>
<evidence type="ECO:0000255" key="1">
    <source>
        <dbReference type="HAMAP-Rule" id="MF_01077"/>
    </source>
</evidence>
<feature type="chain" id="PRO_1000149777" description="Ribosome maturation factor RimP">
    <location>
        <begin position="1"/>
        <end position="151"/>
    </location>
</feature>
<dbReference type="EMBL" id="CP001393">
    <property type="protein sequence ID" value="ACM60149.1"/>
    <property type="molecule type" value="Genomic_DNA"/>
</dbReference>
<dbReference type="RefSeq" id="WP_015907561.1">
    <property type="nucleotide sequence ID" value="NC_012034.1"/>
</dbReference>
<dbReference type="SMR" id="B9MR45"/>
<dbReference type="STRING" id="521460.Athe_1048"/>
<dbReference type="GeneID" id="31772399"/>
<dbReference type="KEGG" id="ate:Athe_1048"/>
<dbReference type="eggNOG" id="COG0779">
    <property type="taxonomic scope" value="Bacteria"/>
</dbReference>
<dbReference type="HOGENOM" id="CLU_070525_2_2_9"/>
<dbReference type="Proteomes" id="UP000007723">
    <property type="component" value="Chromosome"/>
</dbReference>
<dbReference type="GO" id="GO:0005829">
    <property type="term" value="C:cytosol"/>
    <property type="evidence" value="ECO:0007669"/>
    <property type="project" value="TreeGrafter"/>
</dbReference>
<dbReference type="GO" id="GO:0000028">
    <property type="term" value="P:ribosomal small subunit assembly"/>
    <property type="evidence" value="ECO:0007669"/>
    <property type="project" value="TreeGrafter"/>
</dbReference>
<dbReference type="GO" id="GO:0006412">
    <property type="term" value="P:translation"/>
    <property type="evidence" value="ECO:0007669"/>
    <property type="project" value="TreeGrafter"/>
</dbReference>
<dbReference type="CDD" id="cd01734">
    <property type="entry name" value="YlxS_C"/>
    <property type="match status" value="1"/>
</dbReference>
<dbReference type="FunFam" id="3.30.300.70:FF:000001">
    <property type="entry name" value="Ribosome maturation factor RimP"/>
    <property type="match status" value="1"/>
</dbReference>
<dbReference type="Gene3D" id="2.30.30.180">
    <property type="entry name" value="Ribosome maturation factor RimP, C-terminal domain"/>
    <property type="match status" value="1"/>
</dbReference>
<dbReference type="Gene3D" id="3.30.300.70">
    <property type="entry name" value="RimP-like superfamily, N-terminal"/>
    <property type="match status" value="1"/>
</dbReference>
<dbReference type="HAMAP" id="MF_01077">
    <property type="entry name" value="RimP"/>
    <property type="match status" value="1"/>
</dbReference>
<dbReference type="InterPro" id="IPR003728">
    <property type="entry name" value="Ribosome_maturation_RimP"/>
</dbReference>
<dbReference type="InterPro" id="IPR028998">
    <property type="entry name" value="RimP_C"/>
</dbReference>
<dbReference type="InterPro" id="IPR036847">
    <property type="entry name" value="RimP_C_sf"/>
</dbReference>
<dbReference type="InterPro" id="IPR028989">
    <property type="entry name" value="RimP_N"/>
</dbReference>
<dbReference type="InterPro" id="IPR035956">
    <property type="entry name" value="RimP_N_sf"/>
</dbReference>
<dbReference type="PANTHER" id="PTHR33867">
    <property type="entry name" value="RIBOSOME MATURATION FACTOR RIMP"/>
    <property type="match status" value="1"/>
</dbReference>
<dbReference type="PANTHER" id="PTHR33867:SF1">
    <property type="entry name" value="RIBOSOME MATURATION FACTOR RIMP"/>
    <property type="match status" value="1"/>
</dbReference>
<dbReference type="Pfam" id="PF17384">
    <property type="entry name" value="DUF150_C"/>
    <property type="match status" value="1"/>
</dbReference>
<dbReference type="Pfam" id="PF02576">
    <property type="entry name" value="RimP_N"/>
    <property type="match status" value="1"/>
</dbReference>
<dbReference type="SUPFAM" id="SSF74942">
    <property type="entry name" value="YhbC-like, C-terminal domain"/>
    <property type="match status" value="1"/>
</dbReference>
<dbReference type="SUPFAM" id="SSF75420">
    <property type="entry name" value="YhbC-like, N-terminal domain"/>
    <property type="match status" value="1"/>
</dbReference>
<sequence>MSKITKKVEELVKPILERYGFDLVDIEFKKEGKSHFLRVYIDKPGGITIDDCQLVSEELSEKLDIVDPIPFSYYLEVSSPGVDRPLVTDRDFIRNKGKVVDVFLNQPFLNRTRITGELVEKNEKSLILIVDKEKIVIPIENIKKVKLAIRF</sequence>
<organism>
    <name type="scientific">Caldicellulosiruptor bescii (strain ATCC BAA-1888 / DSM 6725 / KCTC 15123 / Z-1320)</name>
    <name type="common">Anaerocellum thermophilum</name>
    <dbReference type="NCBI Taxonomy" id="521460"/>
    <lineage>
        <taxon>Bacteria</taxon>
        <taxon>Bacillati</taxon>
        <taxon>Bacillota</taxon>
        <taxon>Bacillota incertae sedis</taxon>
        <taxon>Caldicellulosiruptorales</taxon>
        <taxon>Caldicellulosiruptoraceae</taxon>
        <taxon>Caldicellulosiruptor</taxon>
    </lineage>
</organism>
<proteinExistence type="inferred from homology"/>
<gene>
    <name evidence="1" type="primary">rimP</name>
    <name type="ordered locus">Athe_1048</name>
</gene>
<comment type="function">
    <text evidence="1">Required for maturation of 30S ribosomal subunits.</text>
</comment>
<comment type="subcellular location">
    <subcellularLocation>
        <location evidence="1">Cytoplasm</location>
    </subcellularLocation>
</comment>
<comment type="similarity">
    <text evidence="1">Belongs to the RimP family.</text>
</comment>
<reference key="1">
    <citation type="submission" date="2009-01" db="EMBL/GenBank/DDBJ databases">
        <title>Complete sequence of chromosome of Caldicellulosiruptor becscii DSM 6725.</title>
        <authorList>
            <person name="Lucas S."/>
            <person name="Copeland A."/>
            <person name="Lapidus A."/>
            <person name="Glavina del Rio T."/>
            <person name="Tice H."/>
            <person name="Bruce D."/>
            <person name="Goodwin L."/>
            <person name="Pitluck S."/>
            <person name="Sims D."/>
            <person name="Meincke L."/>
            <person name="Brettin T."/>
            <person name="Detter J.C."/>
            <person name="Han C."/>
            <person name="Larimer F."/>
            <person name="Land M."/>
            <person name="Hauser L."/>
            <person name="Kyrpides N."/>
            <person name="Ovchinnikova G."/>
            <person name="Kataeva I."/>
            <person name="Adams M.W.W."/>
        </authorList>
    </citation>
    <scope>NUCLEOTIDE SEQUENCE [LARGE SCALE GENOMIC DNA]</scope>
    <source>
        <strain>ATCC BAA-1888 / DSM 6725 / KCTC 15123 / Z-1320</strain>
    </source>
</reference>
<accession>B9MR45</accession>
<protein>
    <recommendedName>
        <fullName evidence="1">Ribosome maturation factor RimP</fullName>
    </recommendedName>
</protein>
<name>RIMP_CALBD</name>